<feature type="chain" id="PRO_0000068759" description="Uncharacterized acetyltransferase YdcK">
    <location>
        <begin position="1"/>
        <end position="326"/>
    </location>
</feature>
<protein>
    <recommendedName>
        <fullName>Uncharacterized acetyltransferase YdcK</fullName>
        <ecNumber>2.3.1.-</ecNumber>
    </recommendedName>
</protein>
<accession>P76100</accession>
<accession>Q2MBC1</accession>
<comment type="similarity">
    <text evidence="1">Belongs to the transferase hexapeptide repeat family.</text>
</comment>
<evidence type="ECO:0000305" key="1"/>
<dbReference type="EC" id="2.3.1.-"/>
<dbReference type="EMBL" id="U00096">
    <property type="protein sequence ID" value="AAC74510.1"/>
    <property type="molecule type" value="Genomic_DNA"/>
</dbReference>
<dbReference type="EMBL" id="AP009048">
    <property type="protein sequence ID" value="BAE76435.1"/>
    <property type="molecule type" value="Genomic_DNA"/>
</dbReference>
<dbReference type="PIR" id="G64894">
    <property type="entry name" value="G64894"/>
</dbReference>
<dbReference type="RefSeq" id="NP_415945.1">
    <property type="nucleotide sequence ID" value="NC_000913.3"/>
</dbReference>
<dbReference type="RefSeq" id="WP_001234042.1">
    <property type="nucleotide sequence ID" value="NZ_SSZK01000021.1"/>
</dbReference>
<dbReference type="SMR" id="P76100"/>
<dbReference type="BioGRID" id="4261374">
    <property type="interactions" value="137"/>
</dbReference>
<dbReference type="DIP" id="DIP-11647N"/>
<dbReference type="FunCoup" id="P76100">
    <property type="interactions" value="224"/>
</dbReference>
<dbReference type="IntAct" id="P76100">
    <property type="interactions" value="5"/>
</dbReference>
<dbReference type="STRING" id="511145.b1428"/>
<dbReference type="jPOST" id="P76100"/>
<dbReference type="PaxDb" id="511145-b1428"/>
<dbReference type="EnsemblBacteria" id="AAC74510">
    <property type="protein sequence ID" value="AAC74510"/>
    <property type="gene ID" value="b1428"/>
</dbReference>
<dbReference type="GeneID" id="944932"/>
<dbReference type="KEGG" id="ecj:JW1424"/>
<dbReference type="KEGG" id="eco:b1428"/>
<dbReference type="KEGG" id="ecoc:C3026_08310"/>
<dbReference type="PATRIC" id="fig|1411691.4.peg.843"/>
<dbReference type="EchoBASE" id="EB3517"/>
<dbReference type="eggNOG" id="COG0663">
    <property type="taxonomic scope" value="Bacteria"/>
</dbReference>
<dbReference type="HOGENOM" id="CLU_063479_0_0_6"/>
<dbReference type="InParanoid" id="P76100"/>
<dbReference type="OMA" id="ENDVWVC"/>
<dbReference type="OrthoDB" id="9806595at2"/>
<dbReference type="BioCyc" id="EcoCyc:G6741-MONOMER"/>
<dbReference type="PRO" id="PR:P76100"/>
<dbReference type="Proteomes" id="UP000000625">
    <property type="component" value="Chromosome"/>
</dbReference>
<dbReference type="GO" id="GO:0016746">
    <property type="term" value="F:acyltransferase activity"/>
    <property type="evidence" value="ECO:0007669"/>
    <property type="project" value="UniProtKB-KW"/>
</dbReference>
<dbReference type="GO" id="GO:0016779">
    <property type="term" value="F:nucleotidyltransferase activity"/>
    <property type="evidence" value="ECO:0007669"/>
    <property type="project" value="UniProtKB-ARBA"/>
</dbReference>
<dbReference type="CDD" id="cd00208">
    <property type="entry name" value="LbetaH"/>
    <property type="match status" value="1"/>
</dbReference>
<dbReference type="Gene3D" id="2.160.10.10">
    <property type="entry name" value="Hexapeptide repeat proteins"/>
    <property type="match status" value="2"/>
</dbReference>
<dbReference type="InterPro" id="IPR040831">
    <property type="entry name" value="B_solenoid_ydck_rpt"/>
</dbReference>
<dbReference type="InterPro" id="IPR050065">
    <property type="entry name" value="GlmU-like"/>
</dbReference>
<dbReference type="InterPro" id="IPR011004">
    <property type="entry name" value="Trimer_LpxA-like_sf"/>
</dbReference>
<dbReference type="InterPro" id="IPR048014">
    <property type="entry name" value="YdcK-like"/>
</dbReference>
<dbReference type="NCBIfam" id="NF040481">
    <property type="entry name" value="YdcK_fam"/>
    <property type="match status" value="1"/>
</dbReference>
<dbReference type="PANTHER" id="PTHR43584:SF2">
    <property type="entry name" value="NUCLEOSIDE-DIPHOSPHATE-SUGAR PYROPHOSPHORYLASES"/>
    <property type="match status" value="1"/>
</dbReference>
<dbReference type="PANTHER" id="PTHR43584">
    <property type="entry name" value="NUCLEOTIDYL TRANSFERASE"/>
    <property type="match status" value="1"/>
</dbReference>
<dbReference type="Pfam" id="PF18836">
    <property type="entry name" value="B_solenoid_ydck"/>
    <property type="match status" value="2"/>
</dbReference>
<dbReference type="SUPFAM" id="SSF51161">
    <property type="entry name" value="Trimeric LpxA-like enzymes"/>
    <property type="match status" value="1"/>
</dbReference>
<sequence length="326" mass="35849">MRKYRLSEEQRAFSYQEDGTKKNVLLRQIIAISDFNDVIAGTAGGWIDRETVLAQEGNCWIYDQNAIAFGGAVISGNTRITGTSVLWGEVYATDNVWIDNSEISQGAYISDSVTIHDSLVYGQCRIFGHALIDQHSMIVAAQGLTPDHQLLLQIYDRARVSASRIVHQAQIYGDAVVRYAFIEHRAEVFDFASIEGNEENNVWLCDCAKVYGHAQVKAGIEEDAIPTIHYSSQVAEYAIVEGNCVLKHHVLVGGNAVVRGGPILLDEHVVIQGESRITGAVIIENHVELTDHAVVEAFDGDTVHVRGPKVINGEERITRTPLAGLL</sequence>
<gene>
    <name type="primary">ydcK</name>
    <name type="ordered locus">b1428</name>
    <name type="ordered locus">JW1424</name>
</gene>
<name>YDCK_ECOLI</name>
<proteinExistence type="inferred from homology"/>
<keyword id="KW-0012">Acyltransferase</keyword>
<keyword id="KW-1185">Reference proteome</keyword>
<keyword id="KW-0677">Repeat</keyword>
<keyword id="KW-0808">Transferase</keyword>
<reference key="1">
    <citation type="journal article" date="1997" name="Science">
        <title>The complete genome sequence of Escherichia coli K-12.</title>
        <authorList>
            <person name="Blattner F.R."/>
            <person name="Plunkett G. III"/>
            <person name="Bloch C.A."/>
            <person name="Perna N.T."/>
            <person name="Burland V."/>
            <person name="Riley M."/>
            <person name="Collado-Vides J."/>
            <person name="Glasner J.D."/>
            <person name="Rode C.K."/>
            <person name="Mayhew G.F."/>
            <person name="Gregor J."/>
            <person name="Davis N.W."/>
            <person name="Kirkpatrick H.A."/>
            <person name="Goeden M.A."/>
            <person name="Rose D.J."/>
            <person name="Mau B."/>
            <person name="Shao Y."/>
        </authorList>
    </citation>
    <scope>NUCLEOTIDE SEQUENCE [LARGE SCALE GENOMIC DNA]</scope>
    <source>
        <strain>K12 / MG1655 / ATCC 47076</strain>
    </source>
</reference>
<reference key="2">
    <citation type="journal article" date="2006" name="Mol. Syst. Biol.">
        <title>Highly accurate genome sequences of Escherichia coli K-12 strains MG1655 and W3110.</title>
        <authorList>
            <person name="Hayashi K."/>
            <person name="Morooka N."/>
            <person name="Yamamoto Y."/>
            <person name="Fujita K."/>
            <person name="Isono K."/>
            <person name="Choi S."/>
            <person name="Ohtsubo E."/>
            <person name="Baba T."/>
            <person name="Wanner B.L."/>
            <person name="Mori H."/>
            <person name="Horiuchi T."/>
        </authorList>
    </citation>
    <scope>NUCLEOTIDE SEQUENCE [LARGE SCALE GENOMIC DNA]</scope>
    <source>
        <strain>K12 / W3110 / ATCC 27325 / DSM 5911</strain>
    </source>
</reference>
<organism>
    <name type="scientific">Escherichia coli (strain K12)</name>
    <dbReference type="NCBI Taxonomy" id="83333"/>
    <lineage>
        <taxon>Bacteria</taxon>
        <taxon>Pseudomonadati</taxon>
        <taxon>Pseudomonadota</taxon>
        <taxon>Gammaproteobacteria</taxon>
        <taxon>Enterobacterales</taxon>
        <taxon>Enterobacteriaceae</taxon>
        <taxon>Escherichia</taxon>
    </lineage>
</organism>